<accession>Q5R512</accession>
<accession>Q5R6W1</accession>
<evidence type="ECO:0000250" key="1"/>
<evidence type="ECO:0000250" key="2">
    <source>
        <dbReference type="UniProtKB" id="P63208"/>
    </source>
</evidence>
<evidence type="ECO:0000250" key="3">
    <source>
        <dbReference type="UniProtKB" id="Q9WTX5"/>
    </source>
</evidence>
<evidence type="ECO:0000256" key="4">
    <source>
        <dbReference type="SAM" id="MobiDB-lite"/>
    </source>
</evidence>
<evidence type="ECO:0000305" key="5"/>
<proteinExistence type="evidence at transcript level"/>
<keyword id="KW-1017">Isopeptide bond</keyword>
<keyword id="KW-0597">Phosphoprotein</keyword>
<keyword id="KW-1185">Reference proteome</keyword>
<keyword id="KW-0832">Ubl conjugation</keyword>
<keyword id="KW-0833">Ubl conjugation pathway</keyword>
<feature type="chain" id="PRO_0000288492" description="S-phase kinase-associated protein 1">
    <location>
        <begin position="1"/>
        <end position="163"/>
    </location>
</feature>
<feature type="region of interest" description="Disordered" evidence="4">
    <location>
        <begin position="63"/>
        <end position="83"/>
    </location>
</feature>
<feature type="region of interest" description="Interaction with the F-box domain of F-box proteins" evidence="1">
    <location>
        <begin position="104"/>
        <end position="163"/>
    </location>
</feature>
<feature type="modified residue" description="Phosphothreonine" evidence="2">
    <location>
        <position position="131"/>
    </location>
</feature>
<feature type="cross-link" description="Glycyl lysine isopeptide (Lys-Gly) (interchain with G-Cter in SUMO1)" evidence="2">
    <location>
        <position position="142"/>
    </location>
</feature>
<feature type="sequence conflict" description="In Ref. 1; CAH92499." evidence="5" ref="1">
    <original>T</original>
    <variation>A</variation>
    <location>
        <position position="29"/>
    </location>
</feature>
<protein>
    <recommendedName>
        <fullName>S-phase kinase-associated protein 1</fullName>
    </recommendedName>
    <alternativeName>
        <fullName>Cyclin-A/CDK2-associated protein p19</fullName>
    </alternativeName>
    <alternativeName>
        <fullName>S-phase kinase-associated protein 1A</fullName>
    </alternativeName>
    <alternativeName>
        <fullName>p19A</fullName>
    </alternativeName>
    <alternativeName>
        <fullName>p19skp1</fullName>
    </alternativeName>
</protein>
<organism>
    <name type="scientific">Pongo abelii</name>
    <name type="common">Sumatran orangutan</name>
    <name type="synonym">Pongo pygmaeus abelii</name>
    <dbReference type="NCBI Taxonomy" id="9601"/>
    <lineage>
        <taxon>Eukaryota</taxon>
        <taxon>Metazoa</taxon>
        <taxon>Chordata</taxon>
        <taxon>Craniata</taxon>
        <taxon>Vertebrata</taxon>
        <taxon>Euteleostomi</taxon>
        <taxon>Mammalia</taxon>
        <taxon>Eutheria</taxon>
        <taxon>Euarchontoglires</taxon>
        <taxon>Primates</taxon>
        <taxon>Haplorrhini</taxon>
        <taxon>Catarrhini</taxon>
        <taxon>Hominidae</taxon>
        <taxon>Pongo</taxon>
    </lineage>
</organism>
<dbReference type="EMBL" id="CR860371">
    <property type="protein sequence ID" value="CAH92499.1"/>
    <property type="molecule type" value="mRNA"/>
</dbReference>
<dbReference type="EMBL" id="CR861073">
    <property type="protein sequence ID" value="CAH93154.1"/>
    <property type="molecule type" value="mRNA"/>
</dbReference>
<dbReference type="RefSeq" id="NP_001127637.1">
    <property type="nucleotide sequence ID" value="NM_001134165.1"/>
</dbReference>
<dbReference type="SMR" id="Q5R512"/>
<dbReference type="FunCoup" id="Q5R512">
    <property type="interactions" value="3675"/>
</dbReference>
<dbReference type="STRING" id="9601.ENSPPYP00000017649"/>
<dbReference type="Ensembl" id="ENSPPYT00000018360.2">
    <property type="protein sequence ID" value="ENSPPYP00000017649.1"/>
    <property type="gene ID" value="ENSPPYG00000015783.2"/>
</dbReference>
<dbReference type="GeneID" id="100174716"/>
<dbReference type="KEGG" id="pon:100174716"/>
<dbReference type="CTD" id="5515"/>
<dbReference type="eggNOG" id="KOG1724">
    <property type="taxonomic scope" value="Eukaryota"/>
</dbReference>
<dbReference type="GeneTree" id="ENSGT00390000012652"/>
<dbReference type="HOGENOM" id="CLU_059252_7_0_1"/>
<dbReference type="InParanoid" id="Q5R512"/>
<dbReference type="OMA" id="DKYTASM"/>
<dbReference type="OrthoDB" id="2342932at2759"/>
<dbReference type="TreeFam" id="TF354233"/>
<dbReference type="UniPathway" id="UPA00143"/>
<dbReference type="Proteomes" id="UP000001595">
    <property type="component" value="Chromosome 5"/>
</dbReference>
<dbReference type="GO" id="GO:0005813">
    <property type="term" value="C:centrosome"/>
    <property type="evidence" value="ECO:0007669"/>
    <property type="project" value="Ensembl"/>
</dbReference>
<dbReference type="GO" id="GO:0031467">
    <property type="term" value="C:Cul7-RING ubiquitin ligase complex"/>
    <property type="evidence" value="ECO:0000250"/>
    <property type="project" value="UniProtKB"/>
</dbReference>
<dbReference type="GO" id="GO:0005829">
    <property type="term" value="C:cytosol"/>
    <property type="evidence" value="ECO:0000250"/>
    <property type="project" value="UniProtKB"/>
</dbReference>
<dbReference type="GO" id="GO:0031519">
    <property type="term" value="C:PcG protein complex"/>
    <property type="evidence" value="ECO:0007669"/>
    <property type="project" value="Ensembl"/>
</dbReference>
<dbReference type="GO" id="GO:0019005">
    <property type="term" value="C:SCF ubiquitin ligase complex"/>
    <property type="evidence" value="ECO:0000250"/>
    <property type="project" value="UniProtKB"/>
</dbReference>
<dbReference type="GO" id="GO:0008013">
    <property type="term" value="F:beta-catenin binding"/>
    <property type="evidence" value="ECO:0007669"/>
    <property type="project" value="Ensembl"/>
</dbReference>
<dbReference type="GO" id="GO:0097602">
    <property type="term" value="F:cullin family protein binding"/>
    <property type="evidence" value="ECO:0007669"/>
    <property type="project" value="Ensembl"/>
</dbReference>
<dbReference type="GO" id="GO:1990444">
    <property type="term" value="F:F-box domain binding"/>
    <property type="evidence" value="ECO:0007669"/>
    <property type="project" value="Ensembl"/>
</dbReference>
<dbReference type="GO" id="GO:0140677">
    <property type="term" value="F:molecular function activator activity"/>
    <property type="evidence" value="ECO:0007669"/>
    <property type="project" value="Ensembl"/>
</dbReference>
<dbReference type="GO" id="GO:0160072">
    <property type="term" value="F:ubiquitin ligase complex scaffold activity"/>
    <property type="evidence" value="ECO:0007669"/>
    <property type="project" value="Ensembl"/>
</dbReference>
<dbReference type="GO" id="GO:1990756">
    <property type="term" value="F:ubiquitin-like ligase-substrate adaptor activity"/>
    <property type="evidence" value="ECO:0007669"/>
    <property type="project" value="Ensembl"/>
</dbReference>
<dbReference type="GO" id="GO:0006338">
    <property type="term" value="P:chromatin remodeling"/>
    <property type="evidence" value="ECO:0007669"/>
    <property type="project" value="Ensembl"/>
</dbReference>
<dbReference type="GO" id="GO:0051457">
    <property type="term" value="P:maintenance of protein location in nucleus"/>
    <property type="evidence" value="ECO:0007669"/>
    <property type="project" value="Ensembl"/>
</dbReference>
<dbReference type="GO" id="GO:0070936">
    <property type="term" value="P:protein K48-linked ubiquitination"/>
    <property type="evidence" value="ECO:0007669"/>
    <property type="project" value="Ensembl"/>
</dbReference>
<dbReference type="GO" id="GO:0006513">
    <property type="term" value="P:protein monoubiquitination"/>
    <property type="evidence" value="ECO:0007669"/>
    <property type="project" value="Ensembl"/>
</dbReference>
<dbReference type="GO" id="GO:0031146">
    <property type="term" value="P:SCF-dependent proteasomal ubiquitin-dependent protein catabolic process"/>
    <property type="evidence" value="ECO:0000250"/>
    <property type="project" value="UniProtKB"/>
</dbReference>
<dbReference type="CDD" id="cd18322">
    <property type="entry name" value="BTB_POZ_SKP1"/>
    <property type="match status" value="1"/>
</dbReference>
<dbReference type="FunFam" id="3.30.710.10:FF:000270">
    <property type="entry name" value="S-phase kinase-associated protein 1"/>
    <property type="match status" value="1"/>
</dbReference>
<dbReference type="Gene3D" id="3.30.710.10">
    <property type="entry name" value="Potassium Channel Kv1.1, Chain A"/>
    <property type="match status" value="1"/>
</dbReference>
<dbReference type="InterPro" id="IPR016897">
    <property type="entry name" value="SKP1"/>
</dbReference>
<dbReference type="InterPro" id="IPR001232">
    <property type="entry name" value="SKP1-like"/>
</dbReference>
<dbReference type="InterPro" id="IPR036296">
    <property type="entry name" value="SKP1-like_dim_sf"/>
</dbReference>
<dbReference type="InterPro" id="IPR011333">
    <property type="entry name" value="SKP1/BTB/POZ_sf"/>
</dbReference>
<dbReference type="InterPro" id="IPR016072">
    <property type="entry name" value="Skp1_comp_dimer"/>
</dbReference>
<dbReference type="InterPro" id="IPR016073">
    <property type="entry name" value="Skp1_comp_POZ"/>
</dbReference>
<dbReference type="PANTHER" id="PTHR11165">
    <property type="entry name" value="SKP1"/>
    <property type="match status" value="1"/>
</dbReference>
<dbReference type="Pfam" id="PF01466">
    <property type="entry name" value="Skp1"/>
    <property type="match status" value="1"/>
</dbReference>
<dbReference type="Pfam" id="PF03931">
    <property type="entry name" value="Skp1_POZ"/>
    <property type="match status" value="1"/>
</dbReference>
<dbReference type="PIRSF" id="PIRSF028729">
    <property type="entry name" value="E3_ubiquit_lig_SCF_Skp"/>
    <property type="match status" value="1"/>
</dbReference>
<dbReference type="SMART" id="SM00512">
    <property type="entry name" value="Skp1"/>
    <property type="match status" value="1"/>
</dbReference>
<dbReference type="SUPFAM" id="SSF54695">
    <property type="entry name" value="POZ domain"/>
    <property type="match status" value="1"/>
</dbReference>
<dbReference type="SUPFAM" id="SSF81382">
    <property type="entry name" value="Skp1 dimerisation domain-like"/>
    <property type="match status" value="1"/>
</dbReference>
<reference key="1">
    <citation type="submission" date="2004-11" db="EMBL/GenBank/DDBJ databases">
        <authorList>
            <consortium name="The German cDNA consortium"/>
        </authorList>
    </citation>
    <scope>NUCLEOTIDE SEQUENCE [LARGE SCALE MRNA]</scope>
    <source>
        <tissue>Brain cortex</tissue>
    </source>
</reference>
<gene>
    <name type="primary">SKP1</name>
    <name type="synonym">SKP1A</name>
</gene>
<name>SKP1_PONAB</name>
<comment type="function">
    <text evidence="2">Essential component of the SCF (SKP1-CUL1-F-box protein) ubiquitin ligase complex, which mediates the ubiquitination of proteins involved in cell cycle progression, signal transduction and transcription. In the SCF complex, serves as an adapter that links the F-box protein to CUL1. The functional specificity of the SCF complex depends on the F-box protein as substrate recognition component. SCF(BTRC) and SCF(FBXW11) direct ubiquitination of CTNNB1 and participate in Wnt signaling. SCF(FBXW11) directs ubiquitination of phosphorylated NFKBIA. SCF(BTRC) directs ubiquitination of NFKBIB, NFKBIE, ATF4, SMAD3, SMAD4, CDC25A, FBXO5, CEP68 and probably NFKB2. SCF(SKP2) directs ubiquitination of phosphorylated CDKN1B/p27kip and is involved in regulation of G1/S transition. SCF(SKP2) directs ubiquitination of ORC1, CDT1, RBL2, ELF4, CDKN1A, RAG2, FOXO1A, and probably MYC and TAL1. SCF(FBXW7) directs ubiquitination of cyclin E, NOTCH1 released notch intracellular domain (NICD), and probably PSEN1. SCF(FBXW2) directs ubiquitination of GCM1. SCF(FBXO32) directs ubiquitination of MYOD1. SCF(FBXO7) directs ubiquitination of BIRC2 and DLGAP5. SCF(FBXO33) directs ubiquitination of YBX1. SCF(FBXO11) directs ubiquitination of BCL6 and DTL but does not seem to direct ubiquitination of TP53. SCF(BTRC) mediates the ubiquitination of NFKBIA at 'Lys-21' and 'Lys-22'; the degradation frees the associated NFKB1-RELA dimer to translocate into the nucleus and to activate transcription. SCF(CCNF) directs ubiquitination of CCP110. SCF(FBXL3) and SCF(FBXL21) direct ubiquitination of CRY1 and CRY2. SCF(FBXO9) directs ubiquitination of TTI1 and TELO2. SCF(FBXO10) directs ubiquitination of BCL2. Core component of the Cul7-RING(FBXW8) ubiquitin ligase complex, which mediates the ubiquitination and subsequent proteasomal degradation of target proteins. Also acts as a core component of the Cul1-RING(FBXL4) ubiquitin ligase complex, which mediates the ubiquitination and subsequent proteasomal degradation of BNIP3 and BNIP3L (By similarity).</text>
</comment>
<comment type="pathway">
    <text>Protein modification; protein ubiquitination.</text>
</comment>
<comment type="subunit">
    <text evidence="2 3">Interacts with KDM2B, forming heterodimers (By similarity). The KDM2B-SKP1 heterodimeric complex interacts with the PCGF1-BCORL heterodimeric complex to form a homotetrameric polycomb repression complex 1 (PRC1.1) (By similarity). Component of multiple SCF (SKP1-CUL1-F-box) E3 ubiquitin-protein ligase complexes formed of CUL1, SKP1, RBX1 and a variable F-box domain-containing protein as substrate-specific subunit. Component of the SCF(FBXW11) complex containing FBXW11. Component of the SCF(SKP2) complex containing SKP2, in which it interacts directly with SKP1, SKP2 and RBX1. Component of the SCF(FBXW2) complex containing FBXw2. Component of the SCF(FBXO32) complex containing FBXO32. Component of the probable SCF(FBXO7) complex containing FBXO7. Component of the SCF(FBXO10) complex containing FBXO10. Component of the SCF(FBXO11) complex containing FBXO11. Component of the SCF(FBXO25) complex containing FBXO25. Component of the SCF(FBXO33) complex containing FBXO33. Component of the probable SCF(FBXO4) complex containing FBXO4. Component of the SCF(FBXO44) complex, composed of SKP1, CUL1 and FBXO44. Component of the SCF(BTRC) complex, composed of SKP1, CUL1 and BTRC. This complex binds phosphorylated NFKBIA. Part of a SCF complex consisting of CUL1, RBX1, SKP1 and FBXO2. Component of a SCF(SKP2)-like complex containing CUL1, SKP1, TRIM21 and SKP2. Component of the SCF(FBXO17) complex, composed of SKP1, CUL1 and FBXO17. Component of the SCF(FBXO27) complex, composed of SKP1, CUL1 and FBXO27. Component of the SCF(CCNF) complex consisting of CUL1, RBX1, SKP1 and CCNF. Component of the SCF(FBXL3) complex composed of CUL1, SKP1, RBX1 and FBXL3. Component of the SCF(FBXL21) complex composed of CUL1, SKP1, RBX1 and FBXL21. Component of the SCF(FBXO9) composed of CUL1, SKP1, RBX1 and FBXO9. Component of the SCF(FBXW7) composed of CUL1, SKP1, RBX1 and FBXW7. Component of the SCF(FBXO31) complex composed of CUL1, SKP1, RBX1 and FBXO31 (By similarity). Interacts with CEP68 (By similarity). Interacts with NOTCH2 and FBXW15 (By similarity). The SKP1-KDM2A and SKP1-KDM2B complexes interact with UBB (By similarity). Component of the Cul7-RING(FBXW8) complex consisting of CUL7, RBX1, SKP1 and FBXW8; within the complex interacts with FBXW8 (By similarity). Interacts with BCORL1 (By similarity). Interacts with FBXL4 (By similarity).</text>
</comment>
<comment type="PTM">
    <text evidence="3">Undergoes autophagy-mediated degradation in the liver in a time-dependent manner.</text>
</comment>
<comment type="similarity">
    <text evidence="5">Belongs to the SKP1 family.</text>
</comment>
<sequence>MPSIKLQSSDGEIFEVDVEIAKQSVTIKTMLEDLGMDDEGDDDPVPLPNVNAAILKKVIQWCTHHKDDPPPPEDDENKEKRTDDIPVWDQEFLKVDQGTLFELILAANYLDIKGLLDVTCKTVANMIKGKTPEEIRKTFNIKNDFTEEEEAQVRKENQWCEEK</sequence>